<comment type="function">
    <text evidence="1 8">TonB-dependent receptor probably involved in ulvan degradation (Probable). Ulvan is the main polysaccharide component of the Ulvales (green seaweed) cell wall. It is composed of disaccharide building blocks comprising 3-sulfated rhamnose (Rha3S) linked to D-glucuronic acid (GlcA), L-iduronic acid (IduA), or D-xylose (Xyl) (Probable). The TonB-dependent receptor may mediate transport of ulvan oligosaccharides from the surface of the outer membrane to the periplasm for subsequent degradation (By similarity).</text>
</comment>
<comment type="subcellular location">
    <subcellularLocation>
        <location evidence="3 5">Cell outer membrane</location>
        <topology evidence="1 3">Multi-pass membrane protein</topology>
    </subcellularLocation>
</comment>
<comment type="induction">
    <text evidence="5">By ulvan and rhamnose.</text>
</comment>
<comment type="similarity">
    <text evidence="7">Belongs to the TonB-dependent receptor family.</text>
</comment>
<proteinExistence type="evidence at transcript level"/>
<protein>
    <recommendedName>
        <fullName evidence="6">TonB-dependent receptor P26</fullName>
        <shortName evidence="6">P26_TBDR</shortName>
    </recommendedName>
    <alternativeName>
        <fullName evidence="6">Polysaccharide utilization locus H protein P26</fullName>
        <shortName>PUL H protein P26</shortName>
    </alternativeName>
</protein>
<accession>T2KM18</accession>
<dbReference type="EMBL" id="HG315671">
    <property type="protein sequence ID" value="CDF79927.1"/>
    <property type="molecule type" value="Genomic_DNA"/>
</dbReference>
<dbReference type="SMR" id="T2KM18"/>
<dbReference type="STRING" id="1347342.BN863_22150"/>
<dbReference type="PATRIC" id="fig|1347342.6.peg.2222"/>
<dbReference type="eggNOG" id="COG1629">
    <property type="taxonomic scope" value="Bacteria"/>
</dbReference>
<dbReference type="HOGENOM" id="CLU_004317_0_2_10"/>
<dbReference type="Proteomes" id="UP000016160">
    <property type="component" value="Chromosome"/>
</dbReference>
<dbReference type="GO" id="GO:0009279">
    <property type="term" value="C:cell outer membrane"/>
    <property type="evidence" value="ECO:0007669"/>
    <property type="project" value="UniProtKB-SubCell"/>
</dbReference>
<dbReference type="FunFam" id="2.170.130.10:FF:000008">
    <property type="entry name" value="SusC/RagA family TonB-linked outer membrane protein"/>
    <property type="match status" value="1"/>
</dbReference>
<dbReference type="Gene3D" id="2.60.40.1120">
    <property type="entry name" value="Carboxypeptidase-like, regulatory domain"/>
    <property type="match status" value="1"/>
</dbReference>
<dbReference type="Gene3D" id="2.40.170.20">
    <property type="entry name" value="TonB-dependent receptor, beta-barrel domain"/>
    <property type="match status" value="1"/>
</dbReference>
<dbReference type="Gene3D" id="2.170.130.10">
    <property type="entry name" value="TonB-dependent receptor, plug domain"/>
    <property type="match status" value="1"/>
</dbReference>
<dbReference type="InterPro" id="IPR008969">
    <property type="entry name" value="CarboxyPept-like_regulatory"/>
</dbReference>
<dbReference type="InterPro" id="IPR012910">
    <property type="entry name" value="Plug_dom"/>
</dbReference>
<dbReference type="InterPro" id="IPR037066">
    <property type="entry name" value="Plug_dom_sf"/>
</dbReference>
<dbReference type="InterPro" id="IPR023996">
    <property type="entry name" value="TonB-dep_OMP_SusC/RagA"/>
</dbReference>
<dbReference type="InterPro" id="IPR023997">
    <property type="entry name" value="TonB-dep_OMP_SusC/RagA_CS"/>
</dbReference>
<dbReference type="InterPro" id="IPR039426">
    <property type="entry name" value="TonB-dep_rcpt-like"/>
</dbReference>
<dbReference type="InterPro" id="IPR000531">
    <property type="entry name" value="TonB-dep_rcpt_b-brl"/>
</dbReference>
<dbReference type="InterPro" id="IPR036942">
    <property type="entry name" value="TonB_rcpt_b-brl_sf"/>
</dbReference>
<dbReference type="NCBIfam" id="TIGR04056">
    <property type="entry name" value="OMP_RagA_SusC"/>
    <property type="match status" value="1"/>
</dbReference>
<dbReference type="NCBIfam" id="TIGR04057">
    <property type="entry name" value="SusC_RagA_signa"/>
    <property type="match status" value="1"/>
</dbReference>
<dbReference type="Pfam" id="PF13715">
    <property type="entry name" value="CarbopepD_reg_2"/>
    <property type="match status" value="1"/>
</dbReference>
<dbReference type="Pfam" id="PF07715">
    <property type="entry name" value="Plug"/>
    <property type="match status" value="1"/>
</dbReference>
<dbReference type="Pfam" id="PF00593">
    <property type="entry name" value="TonB_dep_Rec_b-barrel"/>
    <property type="match status" value="1"/>
</dbReference>
<dbReference type="SUPFAM" id="SSF49464">
    <property type="entry name" value="Carboxypeptidase regulatory domain-like"/>
    <property type="match status" value="1"/>
</dbReference>
<dbReference type="SUPFAM" id="SSF56935">
    <property type="entry name" value="Porins"/>
    <property type="match status" value="1"/>
</dbReference>
<dbReference type="PROSITE" id="PS52016">
    <property type="entry name" value="TONB_DEPENDENT_REC_3"/>
    <property type="match status" value="1"/>
</dbReference>
<feature type="chain" id="PRO_0000448315" description="TonB-dependent receptor P26">
    <location>
        <begin position="1"/>
        <end position="990"/>
    </location>
</feature>
<feature type="domain" description="TBDR plug" evidence="3">
    <location>
        <begin position="97"/>
        <end position="213"/>
    </location>
</feature>
<feature type="domain" description="TBDR beta-barrel" evidence="3">
    <location>
        <begin position="220"/>
        <end position="990"/>
    </location>
</feature>
<feature type="region of interest" description="Disordered" evidence="4">
    <location>
        <begin position="878"/>
        <end position="902"/>
    </location>
</feature>
<feature type="short sequence motif" description="TonB box" evidence="2">
    <location>
        <begin position="86"/>
        <end position="93"/>
    </location>
</feature>
<feature type="short sequence motif" description="TonB C-terminal box" evidence="2">
    <location>
        <begin position="974"/>
        <end position="990"/>
    </location>
</feature>
<name>PLH26_FORAG</name>
<reference key="1">
    <citation type="journal article" date="2013" name="Appl. Environ. Microbiol.">
        <title>The genome of the alga-associated marine flavobacterium Formosa agariphila KMM 3901T reveals a broad potential for degradation of algal polysaccharides.</title>
        <authorList>
            <person name="Mann A.J."/>
            <person name="Hahnke R.L."/>
            <person name="Huang S."/>
            <person name="Werner J."/>
            <person name="Xing P."/>
            <person name="Barbeyron T."/>
            <person name="Huettel B."/>
            <person name="Stueber K."/>
            <person name="Reinhardt R."/>
            <person name="Harder J."/>
            <person name="Gloeckner F.O."/>
            <person name="Amann R.I."/>
            <person name="Teeling H."/>
        </authorList>
    </citation>
    <scope>NUCLEOTIDE SEQUENCE [LARGE SCALE GENOMIC DNA]</scope>
    <source>
        <strain>DSM 15362 / KCTC 12365 / LMG 23005 / KMM 3901 / M-2Alg 35-1</strain>
    </source>
</reference>
<reference key="2">
    <citation type="journal article" date="2019" name="Nat. Chem. Biol.">
        <title>A marine bacterial enzymatic cascade degrades the algal polysaccharide ulvan.</title>
        <authorList>
            <person name="Reisky L."/>
            <person name="Prechoux A."/>
            <person name="Zuehlke M.K."/>
            <person name="Baeumgen M."/>
            <person name="Robb C.S."/>
            <person name="Gerlach N."/>
            <person name="Roret T."/>
            <person name="Stanetty C."/>
            <person name="Larocque R."/>
            <person name="Michel G."/>
            <person name="Song T."/>
            <person name="Markert S."/>
            <person name="Unfried F."/>
            <person name="Mihovilovic M.D."/>
            <person name="Trautwein-Schult A."/>
            <person name="Becher D."/>
            <person name="Schweder T."/>
            <person name="Bornscheuer U.T."/>
            <person name="Hehemann J.H."/>
        </authorList>
    </citation>
    <scope>FUNCTION</scope>
    <scope>SUBCELLULAR LOCATION</scope>
    <scope>INDUCTION</scope>
</reference>
<keyword id="KW-0998">Cell outer membrane</keyword>
<keyword id="KW-0472">Membrane</keyword>
<keyword id="KW-0675">Receptor</keyword>
<keyword id="KW-1185">Reference proteome</keyword>
<keyword id="KW-0798">TonB box</keyword>
<keyword id="KW-0812">Transmembrane</keyword>
<keyword id="KW-1134">Transmembrane beta strand</keyword>
<keyword id="KW-0813">Transport</keyword>
<evidence type="ECO:0000250" key="1">
    <source>
        <dbReference type="UniProtKB" id="Q8A1G2"/>
    </source>
</evidence>
<evidence type="ECO:0000255" key="2"/>
<evidence type="ECO:0000255" key="3">
    <source>
        <dbReference type="PROSITE-ProRule" id="PRU01360"/>
    </source>
</evidence>
<evidence type="ECO:0000256" key="4">
    <source>
        <dbReference type="SAM" id="MobiDB-lite"/>
    </source>
</evidence>
<evidence type="ECO:0000269" key="5">
    <source>
    </source>
</evidence>
<evidence type="ECO:0000303" key="6">
    <source>
    </source>
</evidence>
<evidence type="ECO:0000305" key="7"/>
<evidence type="ECO:0000305" key="8">
    <source>
    </source>
</evidence>
<organism>
    <name type="scientific">Formosa agariphila (strain DSM 15362 / KCTC 12365 / LMG 23005 / KMM 3901 / M-2Alg 35-1)</name>
    <dbReference type="NCBI Taxonomy" id="1347342"/>
    <lineage>
        <taxon>Bacteria</taxon>
        <taxon>Pseudomonadati</taxon>
        <taxon>Bacteroidota</taxon>
        <taxon>Flavobacteriia</taxon>
        <taxon>Flavobacteriales</taxon>
        <taxon>Flavobacteriaceae</taxon>
        <taxon>Formosa</taxon>
    </lineage>
</organism>
<sequence length="990" mass="107920">MFCYSSLHAQIISGTVSAEGQVLPGAAVIIKGSTKGTSTDFDGYYTIEAQASDVLVFSYVGYANKEVTVGTNTQIDVALEADNTLDEVVVIGYGTQRKSDLTGSVSSVSAEDVNVNPVSRVDQALQGRAAGVQVTQTSGAPGAASVIRVRGGNSITGSNEPLWVIDGIVVGTNFNLNNINSNDIKSIEILKDASSIAIYGSRGANGVVLVTTKTGTGAGSSKPEVSANIYTSMQMVPELPKMLSQAEQIAYTNESAAFRGAAIPFPNDPSTYPNNDWFDLLLGPAPIYNADVSITGASENVSYYTSLNYFNQEGIVKTSGIEKYIFRSNLDIRLSDKLKTGFRVNYSYIDQQNGLVGYGNAIATLPTQPIYNEDGSYNGFDEVVGSPWSNPIANMALNTNETFRNNFLGSFYIDYSPSEKWIIRSTFSPDFDNSKQNRFTSSQSPNLLYLGEGGNASVRTVNTKGWNNENTIQYQSEIGENHRITALGGASFQKVSTEIVESEAFGITNDATGFNNLSNSDPTRNILTSDYSGFQIASFFGRLNYAYKDKYLLTLVGRTDGSSVFSDDNKYEFYPSIAAAWKISEEGFMQNQETFGELKLRASYGKSGNQAIDPYRTKGLLVEANTTLNGIQQTGLTLGRPSNPNLTWETTNSLDIALEASMFNGRVFAELNYYYKKTNDLLLDVTIPKQTGFNSQLQNVGSLENKGWEFSLNTTNVRTDNFNWKSTLMLSSNKNKILDLGGVDFIDLVVDELLGSGNTRLIVGESVPVFTGVKFLGTWKSQEEIDASGLRDPQVVGGAKYHDENGDGIISTDDAVVLGSPLPDLIFGFENTLSYKNLDFSFYFQGTQGNEVYNLRMRNHYFNRGEFTKFAEVADRWTPENPTSDIPRAGGDSVTGTPPNSAYVEDGSHIRLKTVRLAYNMPVDKMGMDGVKNATVYLTGTNLLLWSDFRLIDPEGSNFGRNGIGNIAQGYNDGSYPNPRTITLGLNVTF</sequence>
<gene>
    <name type="ORF">BN863_22150</name>
</gene>